<gene>
    <name evidence="1" type="primary">acpS</name>
    <name type="ordered locus">SP_1699</name>
</gene>
<keyword id="KW-0002">3D-structure</keyword>
<keyword id="KW-0963">Cytoplasm</keyword>
<keyword id="KW-0275">Fatty acid biosynthesis</keyword>
<keyword id="KW-0276">Fatty acid metabolism</keyword>
<keyword id="KW-0444">Lipid biosynthesis</keyword>
<keyword id="KW-0443">Lipid metabolism</keyword>
<keyword id="KW-0460">Magnesium</keyword>
<keyword id="KW-0479">Metal-binding</keyword>
<keyword id="KW-1185">Reference proteome</keyword>
<keyword id="KW-0808">Transferase</keyword>
<name>ACPS_STRPN</name>
<accession>P0A2W6</accession>
<accession>Q9F7T5</accession>
<evidence type="ECO:0000255" key="1">
    <source>
        <dbReference type="HAMAP-Rule" id="MF_00101"/>
    </source>
</evidence>
<evidence type="ECO:0000269" key="2">
    <source>
    </source>
</evidence>
<evidence type="ECO:0007829" key="3">
    <source>
        <dbReference type="PDB" id="1FTH"/>
    </source>
</evidence>
<sequence length="120" mass="13388">MIVGHGIDIEELASIESAVTRHEGFAKRVLTAQEMERFTSLKGRRQIEYLAGRWSAKEAFSKAMGTGISKLGFQDLEVLNNERGAPYFSQAPFSGKIWLSISHTDQFVTASVILEENHES</sequence>
<comment type="function">
    <text evidence="1">Transfers the 4'-phosphopantetheine moiety from coenzyme A to a Ser of acyl-carrier-protein.</text>
</comment>
<comment type="catalytic activity">
    <reaction evidence="1">
        <text>apo-[ACP] + CoA = holo-[ACP] + adenosine 3',5'-bisphosphate + H(+)</text>
        <dbReference type="Rhea" id="RHEA:12068"/>
        <dbReference type="Rhea" id="RHEA-COMP:9685"/>
        <dbReference type="Rhea" id="RHEA-COMP:9690"/>
        <dbReference type="ChEBI" id="CHEBI:15378"/>
        <dbReference type="ChEBI" id="CHEBI:29999"/>
        <dbReference type="ChEBI" id="CHEBI:57287"/>
        <dbReference type="ChEBI" id="CHEBI:58343"/>
        <dbReference type="ChEBI" id="CHEBI:64479"/>
        <dbReference type="EC" id="2.7.8.7"/>
    </reaction>
</comment>
<comment type="cofactor">
    <cofactor evidence="1">
        <name>Mg(2+)</name>
        <dbReference type="ChEBI" id="CHEBI:18420"/>
    </cofactor>
</comment>
<comment type="subunit">
    <text evidence="2">Homotrimer.</text>
</comment>
<comment type="interaction">
    <interactant intactId="EBI-2207344">
        <id>P0A2W6</id>
    </interactant>
    <interactant intactId="EBI-2207079">
        <id>P95830</id>
        <label>dnaJ</label>
    </interactant>
    <organismsDiffer>false</organismsDiffer>
    <experiments>2</experiments>
</comment>
<comment type="interaction">
    <interactant intactId="EBI-2207344">
        <id>P0A2W6</id>
    </interactant>
    <interactant intactId="EBI-2207053">
        <id>Q97SE5</id>
        <label>gatC</label>
    </interactant>
    <organismsDiffer>false</organismsDiffer>
    <experiments>2</experiments>
</comment>
<comment type="interaction">
    <interactant intactId="EBI-2207344">
        <id>P0A2W6</id>
    </interactant>
    <interactant intactId="EBI-2206949">
        <id>Q97NV3</id>
        <label>groES</label>
    </interactant>
    <organismsDiffer>false</organismsDiffer>
    <experiments>2</experiments>
</comment>
<comment type="interaction">
    <interactant intactId="EBI-2207344">
        <id>P0A2W6</id>
    </interactant>
    <interactant intactId="EBI-2207065">
        <id>Q97S73</id>
        <label>grpE</label>
    </interactant>
    <organismsDiffer>false</organismsDiffer>
    <experiments>2</experiments>
</comment>
<comment type="interaction">
    <interactant intactId="EBI-2207344">
        <id>P0A2W6</id>
    </interactant>
    <interactant intactId="EBI-2206983">
        <id>Q97SR4</id>
        <label>uppS</label>
    </interactant>
    <organismsDiffer>false</organismsDiffer>
    <experiments>2</experiments>
</comment>
<comment type="subcellular location">
    <subcellularLocation>
        <location evidence="1">Cytoplasm</location>
    </subcellularLocation>
</comment>
<comment type="similarity">
    <text evidence="1">Belongs to the P-Pant transferase superfamily. AcpS family.</text>
</comment>
<proteinExistence type="evidence at protein level"/>
<organism>
    <name type="scientific">Streptococcus pneumoniae serotype 4 (strain ATCC BAA-334 / TIGR4)</name>
    <dbReference type="NCBI Taxonomy" id="170187"/>
    <lineage>
        <taxon>Bacteria</taxon>
        <taxon>Bacillati</taxon>
        <taxon>Bacillota</taxon>
        <taxon>Bacilli</taxon>
        <taxon>Lactobacillales</taxon>
        <taxon>Streptococcaceae</taxon>
        <taxon>Streptococcus</taxon>
    </lineage>
</organism>
<reference key="1">
    <citation type="journal article" date="2001" name="Science">
        <title>Complete genome sequence of a virulent isolate of Streptococcus pneumoniae.</title>
        <authorList>
            <person name="Tettelin H."/>
            <person name="Nelson K.E."/>
            <person name="Paulsen I.T."/>
            <person name="Eisen J.A."/>
            <person name="Read T.D."/>
            <person name="Peterson S.N."/>
            <person name="Heidelberg J.F."/>
            <person name="DeBoy R.T."/>
            <person name="Haft D.H."/>
            <person name="Dodson R.J."/>
            <person name="Durkin A.S."/>
            <person name="Gwinn M.L."/>
            <person name="Kolonay J.F."/>
            <person name="Nelson W.C."/>
            <person name="Peterson J.D."/>
            <person name="Umayam L.A."/>
            <person name="White O."/>
            <person name="Salzberg S.L."/>
            <person name="Lewis M.R."/>
            <person name="Radune D."/>
            <person name="Holtzapple E.K."/>
            <person name="Khouri H.M."/>
            <person name="Wolf A.M."/>
            <person name="Utterback T.R."/>
            <person name="Hansen C.L."/>
            <person name="McDonald L.A."/>
            <person name="Feldblyum T.V."/>
            <person name="Angiuoli S.V."/>
            <person name="Dickinson T."/>
            <person name="Hickey E.K."/>
            <person name="Holt I.E."/>
            <person name="Loftus B.J."/>
            <person name="Yang F."/>
            <person name="Smith H.O."/>
            <person name="Venter J.C."/>
            <person name="Dougherty B.A."/>
            <person name="Morrison D.A."/>
            <person name="Hollingshead S.K."/>
            <person name="Fraser C.M."/>
        </authorList>
    </citation>
    <scope>NUCLEOTIDE SEQUENCE [LARGE SCALE GENOMIC DNA]</scope>
    <source>
        <strain>ATCC BAA-334 / TIGR4</strain>
    </source>
</reference>
<reference key="2">
    <citation type="journal article" date="2000" name="EMBO J.">
        <title>Crystal structure of Streptococcus pneumoniae acyl carrier protein synthase: an essential enzyme in bacterial fatty acid biosynthesis.</title>
        <authorList>
            <person name="Chirgadze N.Y."/>
            <person name="Briggs S.L."/>
            <person name="McAllister K.A."/>
            <person name="Fischl A.S."/>
            <person name="Zhao G."/>
        </authorList>
    </citation>
    <scope>X-RAY CRYSTALLOGRAPHY (1.9 ANGSTROMS) OF COMPLEX WITH 3'-5'-ADP</scope>
    <scope>SUBUNIT</scope>
</reference>
<dbReference type="EC" id="2.7.8.7" evidence="1"/>
<dbReference type="EMBL" id="AE005672">
    <property type="protein sequence ID" value="AAK75777.1"/>
    <property type="molecule type" value="Genomic_DNA"/>
</dbReference>
<dbReference type="PIR" id="H95197">
    <property type="entry name" value="H95197"/>
</dbReference>
<dbReference type="RefSeq" id="WP_000635008.1">
    <property type="nucleotide sequence ID" value="NZ_CP155539.1"/>
</dbReference>
<dbReference type="PDB" id="1FTE">
    <property type="method" value="X-ray"/>
    <property type="resolution" value="2.40 A"/>
    <property type="chains" value="A/B/C=1-120"/>
</dbReference>
<dbReference type="PDB" id="1FTF">
    <property type="method" value="X-ray"/>
    <property type="resolution" value="2.05 A"/>
    <property type="chains" value="A/B/C=1-120"/>
</dbReference>
<dbReference type="PDB" id="1FTH">
    <property type="method" value="X-ray"/>
    <property type="resolution" value="1.90 A"/>
    <property type="chains" value="A/B/C=1-120"/>
</dbReference>
<dbReference type="PDBsum" id="1FTE"/>
<dbReference type="PDBsum" id="1FTF"/>
<dbReference type="PDBsum" id="1FTH"/>
<dbReference type="SMR" id="P0A2W6"/>
<dbReference type="IntAct" id="P0A2W6">
    <property type="interactions" value="5"/>
</dbReference>
<dbReference type="PaxDb" id="170187-SP_1699"/>
<dbReference type="EnsemblBacteria" id="AAK75777">
    <property type="protein sequence ID" value="AAK75777"/>
    <property type="gene ID" value="SP_1699"/>
</dbReference>
<dbReference type="KEGG" id="spn:SP_1699"/>
<dbReference type="eggNOG" id="COG0736">
    <property type="taxonomic scope" value="Bacteria"/>
</dbReference>
<dbReference type="PhylomeDB" id="P0A2W6"/>
<dbReference type="EvolutionaryTrace" id="P0A2W6"/>
<dbReference type="Proteomes" id="UP000000585">
    <property type="component" value="Chromosome"/>
</dbReference>
<dbReference type="GO" id="GO:0005829">
    <property type="term" value="C:cytosol"/>
    <property type="evidence" value="ECO:0007669"/>
    <property type="project" value="TreeGrafter"/>
</dbReference>
<dbReference type="GO" id="GO:0008897">
    <property type="term" value="F:holo-[acyl-carrier-protein] synthase activity"/>
    <property type="evidence" value="ECO:0007669"/>
    <property type="project" value="UniProtKB-UniRule"/>
</dbReference>
<dbReference type="GO" id="GO:0000287">
    <property type="term" value="F:magnesium ion binding"/>
    <property type="evidence" value="ECO:0007669"/>
    <property type="project" value="UniProtKB-UniRule"/>
</dbReference>
<dbReference type="GO" id="GO:0006633">
    <property type="term" value="P:fatty acid biosynthetic process"/>
    <property type="evidence" value="ECO:0007669"/>
    <property type="project" value="UniProtKB-UniRule"/>
</dbReference>
<dbReference type="GO" id="GO:0019878">
    <property type="term" value="P:lysine biosynthetic process via aminoadipic acid"/>
    <property type="evidence" value="ECO:0007669"/>
    <property type="project" value="TreeGrafter"/>
</dbReference>
<dbReference type="Gene3D" id="3.90.470.20">
    <property type="entry name" value="4'-phosphopantetheinyl transferase domain"/>
    <property type="match status" value="1"/>
</dbReference>
<dbReference type="HAMAP" id="MF_00101">
    <property type="entry name" value="AcpS"/>
    <property type="match status" value="1"/>
</dbReference>
<dbReference type="InterPro" id="IPR008278">
    <property type="entry name" value="4-PPantetheinyl_Trfase_dom"/>
</dbReference>
<dbReference type="InterPro" id="IPR037143">
    <property type="entry name" value="4-PPantetheinyl_Trfase_dom_sf"/>
</dbReference>
<dbReference type="InterPro" id="IPR002582">
    <property type="entry name" value="ACPS"/>
</dbReference>
<dbReference type="InterPro" id="IPR050559">
    <property type="entry name" value="P-Pant_transferase_sf"/>
</dbReference>
<dbReference type="InterPro" id="IPR004568">
    <property type="entry name" value="Ppantetheine-prot_Trfase_dom"/>
</dbReference>
<dbReference type="NCBIfam" id="TIGR00516">
    <property type="entry name" value="acpS"/>
    <property type="match status" value="1"/>
</dbReference>
<dbReference type="NCBIfam" id="TIGR00556">
    <property type="entry name" value="pantethn_trn"/>
    <property type="match status" value="1"/>
</dbReference>
<dbReference type="PANTHER" id="PTHR12215:SF10">
    <property type="entry name" value="L-AMINOADIPATE-SEMIALDEHYDE DEHYDROGENASE-PHOSPHOPANTETHEINYL TRANSFERASE"/>
    <property type="match status" value="1"/>
</dbReference>
<dbReference type="PANTHER" id="PTHR12215">
    <property type="entry name" value="PHOSPHOPANTETHEINE TRANSFERASE"/>
    <property type="match status" value="1"/>
</dbReference>
<dbReference type="Pfam" id="PF01648">
    <property type="entry name" value="ACPS"/>
    <property type="match status" value="1"/>
</dbReference>
<dbReference type="SUPFAM" id="SSF56214">
    <property type="entry name" value="4'-phosphopantetheinyl transferase"/>
    <property type="match status" value="1"/>
</dbReference>
<feature type="chain" id="PRO_0000175713" description="Holo-[acyl-carrier-protein] synthase">
    <location>
        <begin position="1"/>
        <end position="120"/>
    </location>
</feature>
<feature type="binding site" evidence="1">
    <location>
        <position position="8"/>
    </location>
    <ligand>
        <name>Mg(2+)</name>
        <dbReference type="ChEBI" id="CHEBI:18420"/>
    </ligand>
</feature>
<feature type="binding site" evidence="1">
    <location>
        <position position="58"/>
    </location>
    <ligand>
        <name>Mg(2+)</name>
        <dbReference type="ChEBI" id="CHEBI:18420"/>
    </ligand>
</feature>
<feature type="strand" evidence="3">
    <location>
        <begin position="2"/>
        <end position="11"/>
    </location>
</feature>
<feature type="helix" evidence="3">
    <location>
        <begin position="12"/>
        <end position="20"/>
    </location>
</feature>
<feature type="helix" evidence="3">
    <location>
        <begin position="25"/>
        <end position="29"/>
    </location>
</feature>
<feature type="helix" evidence="3">
    <location>
        <begin position="32"/>
        <end position="40"/>
    </location>
</feature>
<feature type="helix" evidence="3">
    <location>
        <begin position="43"/>
        <end position="63"/>
    </location>
</feature>
<feature type="strand" evidence="3">
    <location>
        <begin position="68"/>
        <end position="71"/>
    </location>
</feature>
<feature type="helix" evidence="3">
    <location>
        <begin position="73"/>
        <end position="75"/>
    </location>
</feature>
<feature type="strand" evidence="3">
    <location>
        <begin position="77"/>
        <end position="80"/>
    </location>
</feature>
<feature type="strand" evidence="3">
    <location>
        <begin position="86"/>
        <end position="90"/>
    </location>
</feature>
<feature type="strand" evidence="3">
    <location>
        <begin position="95"/>
        <end position="103"/>
    </location>
</feature>
<feature type="strand" evidence="3">
    <location>
        <begin position="105"/>
        <end position="115"/>
    </location>
</feature>
<protein>
    <recommendedName>
        <fullName evidence="1">Holo-[acyl-carrier-protein] synthase</fullName>
        <shortName evidence="1">Holo-ACP synthase</shortName>
        <ecNumber evidence="1">2.7.8.7</ecNumber>
    </recommendedName>
    <alternativeName>
        <fullName evidence="1">4'-phosphopantetheinyl transferase AcpS</fullName>
    </alternativeName>
</protein>